<reference key="1">
    <citation type="journal article" date="2009" name="J. Bacteriol.">
        <title>Complete genome sequence and comparative genome analysis of enteropathogenic Escherichia coli O127:H6 strain E2348/69.</title>
        <authorList>
            <person name="Iguchi A."/>
            <person name="Thomson N.R."/>
            <person name="Ogura Y."/>
            <person name="Saunders D."/>
            <person name="Ooka T."/>
            <person name="Henderson I.R."/>
            <person name="Harris D."/>
            <person name="Asadulghani M."/>
            <person name="Kurokawa K."/>
            <person name="Dean P."/>
            <person name="Kenny B."/>
            <person name="Quail M.A."/>
            <person name="Thurston S."/>
            <person name="Dougan G."/>
            <person name="Hayashi T."/>
            <person name="Parkhill J."/>
            <person name="Frankel G."/>
        </authorList>
    </citation>
    <scope>NUCLEOTIDE SEQUENCE [LARGE SCALE GENOMIC DNA]</scope>
    <source>
        <strain>E2348/69 / EPEC</strain>
    </source>
</reference>
<name>TDH_ECO27</name>
<gene>
    <name evidence="1" type="primary">tdh</name>
    <name type="ordered locus">E2348C_3865</name>
</gene>
<accession>B7ULH2</accession>
<feature type="chain" id="PRO_1000147259" description="L-threonine 3-dehydrogenase">
    <location>
        <begin position="1"/>
        <end position="341"/>
    </location>
</feature>
<feature type="active site" description="Charge relay system" evidence="1">
    <location>
        <position position="40"/>
    </location>
</feature>
<feature type="active site" description="Charge relay system" evidence="1">
    <location>
        <position position="43"/>
    </location>
</feature>
<feature type="binding site" evidence="1">
    <location>
        <position position="38"/>
    </location>
    <ligand>
        <name>Zn(2+)</name>
        <dbReference type="ChEBI" id="CHEBI:29105"/>
        <label>1</label>
        <note>catalytic</note>
    </ligand>
</feature>
<feature type="binding site" evidence="1">
    <location>
        <position position="63"/>
    </location>
    <ligand>
        <name>Zn(2+)</name>
        <dbReference type="ChEBI" id="CHEBI:29105"/>
        <label>1</label>
        <note>catalytic</note>
    </ligand>
</feature>
<feature type="binding site" evidence="1">
    <location>
        <position position="64"/>
    </location>
    <ligand>
        <name>Zn(2+)</name>
        <dbReference type="ChEBI" id="CHEBI:29105"/>
        <label>1</label>
        <note>catalytic</note>
    </ligand>
</feature>
<feature type="binding site" evidence="1">
    <location>
        <position position="93"/>
    </location>
    <ligand>
        <name>Zn(2+)</name>
        <dbReference type="ChEBI" id="CHEBI:29105"/>
        <label>2</label>
    </ligand>
</feature>
<feature type="binding site" evidence="1">
    <location>
        <position position="96"/>
    </location>
    <ligand>
        <name>Zn(2+)</name>
        <dbReference type="ChEBI" id="CHEBI:29105"/>
        <label>2</label>
    </ligand>
</feature>
<feature type="binding site" evidence="1">
    <location>
        <position position="99"/>
    </location>
    <ligand>
        <name>Zn(2+)</name>
        <dbReference type="ChEBI" id="CHEBI:29105"/>
        <label>2</label>
    </ligand>
</feature>
<feature type="binding site" evidence="1">
    <location>
        <position position="107"/>
    </location>
    <ligand>
        <name>Zn(2+)</name>
        <dbReference type="ChEBI" id="CHEBI:29105"/>
        <label>2</label>
    </ligand>
</feature>
<feature type="binding site" evidence="1">
    <location>
        <position position="175"/>
    </location>
    <ligand>
        <name>NAD(+)</name>
        <dbReference type="ChEBI" id="CHEBI:57540"/>
    </ligand>
</feature>
<feature type="binding site" evidence="1">
    <location>
        <position position="195"/>
    </location>
    <ligand>
        <name>NAD(+)</name>
        <dbReference type="ChEBI" id="CHEBI:57540"/>
    </ligand>
</feature>
<feature type="binding site" evidence="1">
    <location>
        <position position="200"/>
    </location>
    <ligand>
        <name>NAD(+)</name>
        <dbReference type="ChEBI" id="CHEBI:57540"/>
    </ligand>
</feature>
<feature type="binding site" evidence="1">
    <location>
        <begin position="262"/>
        <end position="264"/>
    </location>
    <ligand>
        <name>NAD(+)</name>
        <dbReference type="ChEBI" id="CHEBI:57540"/>
    </ligand>
</feature>
<feature type="binding site" evidence="1">
    <location>
        <begin position="286"/>
        <end position="287"/>
    </location>
    <ligand>
        <name>NAD(+)</name>
        <dbReference type="ChEBI" id="CHEBI:57540"/>
    </ligand>
</feature>
<feature type="site" description="Important for catalytic activity for the proton relay mechanism but does not participate directly in the coordination of zinc atom" evidence="1">
    <location>
        <position position="148"/>
    </location>
</feature>
<protein>
    <recommendedName>
        <fullName evidence="1">L-threonine 3-dehydrogenase</fullName>
        <shortName evidence="1">TDH</shortName>
        <ecNumber evidence="1">1.1.1.103</ecNumber>
    </recommendedName>
</protein>
<comment type="function">
    <text evidence="1">Catalyzes the NAD(+)-dependent oxidation of L-threonine to 2-amino-3-ketobutyrate.</text>
</comment>
<comment type="catalytic activity">
    <reaction evidence="1">
        <text>L-threonine + NAD(+) = (2S)-2-amino-3-oxobutanoate + NADH + H(+)</text>
        <dbReference type="Rhea" id="RHEA:13161"/>
        <dbReference type="ChEBI" id="CHEBI:15378"/>
        <dbReference type="ChEBI" id="CHEBI:57540"/>
        <dbReference type="ChEBI" id="CHEBI:57926"/>
        <dbReference type="ChEBI" id="CHEBI:57945"/>
        <dbReference type="ChEBI" id="CHEBI:78948"/>
        <dbReference type="EC" id="1.1.1.103"/>
    </reaction>
</comment>
<comment type="cofactor">
    <cofactor evidence="1">
        <name>Zn(2+)</name>
        <dbReference type="ChEBI" id="CHEBI:29105"/>
    </cofactor>
    <text evidence="1">Binds 2 Zn(2+) ions per subunit.</text>
</comment>
<comment type="pathway">
    <text evidence="1">Amino-acid degradation; L-threonine degradation via oxydo-reductase pathway; glycine from L-threonine: step 1/2.</text>
</comment>
<comment type="subunit">
    <text evidence="1">Homotetramer.</text>
</comment>
<comment type="subcellular location">
    <subcellularLocation>
        <location evidence="1">Cytoplasm</location>
    </subcellularLocation>
</comment>
<comment type="similarity">
    <text evidence="1">Belongs to the zinc-containing alcohol dehydrogenase family.</text>
</comment>
<keyword id="KW-0963">Cytoplasm</keyword>
<keyword id="KW-0479">Metal-binding</keyword>
<keyword id="KW-0520">NAD</keyword>
<keyword id="KW-0560">Oxidoreductase</keyword>
<keyword id="KW-1185">Reference proteome</keyword>
<keyword id="KW-0862">Zinc</keyword>
<evidence type="ECO:0000255" key="1">
    <source>
        <dbReference type="HAMAP-Rule" id="MF_00627"/>
    </source>
</evidence>
<organism>
    <name type="scientific">Escherichia coli O127:H6 (strain E2348/69 / EPEC)</name>
    <dbReference type="NCBI Taxonomy" id="574521"/>
    <lineage>
        <taxon>Bacteria</taxon>
        <taxon>Pseudomonadati</taxon>
        <taxon>Pseudomonadota</taxon>
        <taxon>Gammaproteobacteria</taxon>
        <taxon>Enterobacterales</taxon>
        <taxon>Enterobacteriaceae</taxon>
        <taxon>Escherichia</taxon>
    </lineage>
</organism>
<proteinExistence type="inferred from homology"/>
<sequence length="341" mass="37285">MKALSKLKAEEGIWMTDVPVPELGHNDLLIKIRKTAICGTDVHIYNWDEWSQKTIPVPMVVGHEYVGEVVGIGQEVKGFKIGDRVSGEGHITCGHCRNCRGGRTHLCRNTIGVGVNRPGCFAEYLVIPAFNAFKIPDNISDDLASIFDPFGNAVHTALSFDLVGEDVLVSGAGPIGIMAAAVAKHVGARNVVITDVNEYRLELARKMGITRAVNVAKENLNDVMTELGMTEGFDVGLEMSGAPPAFRTMLDTMNHGGRIAMLGIPPSDMSIDWTKVIFKGLFIKGIYGREMFETWYKMAALIQSGLDLSPIITHRFSIDDFQKGFDAMRSGQSGKVILSWD</sequence>
<dbReference type="EC" id="1.1.1.103" evidence="1"/>
<dbReference type="EMBL" id="FM180568">
    <property type="protein sequence ID" value="CAS11413.1"/>
    <property type="molecule type" value="Genomic_DNA"/>
</dbReference>
<dbReference type="RefSeq" id="WP_000646018.1">
    <property type="nucleotide sequence ID" value="NC_011601.1"/>
</dbReference>
<dbReference type="SMR" id="B7ULH2"/>
<dbReference type="KEGG" id="ecg:E2348C_3865"/>
<dbReference type="HOGENOM" id="CLU_026673_11_0_6"/>
<dbReference type="UniPathway" id="UPA00046">
    <property type="reaction ID" value="UER00505"/>
</dbReference>
<dbReference type="Proteomes" id="UP000008205">
    <property type="component" value="Chromosome"/>
</dbReference>
<dbReference type="GO" id="GO:0005737">
    <property type="term" value="C:cytoplasm"/>
    <property type="evidence" value="ECO:0007669"/>
    <property type="project" value="UniProtKB-SubCell"/>
</dbReference>
<dbReference type="GO" id="GO:0008743">
    <property type="term" value="F:L-threonine 3-dehydrogenase activity"/>
    <property type="evidence" value="ECO:0007669"/>
    <property type="project" value="UniProtKB-UniRule"/>
</dbReference>
<dbReference type="GO" id="GO:0008270">
    <property type="term" value="F:zinc ion binding"/>
    <property type="evidence" value="ECO:0007669"/>
    <property type="project" value="UniProtKB-UniRule"/>
</dbReference>
<dbReference type="GO" id="GO:0019518">
    <property type="term" value="P:L-threonine catabolic process to glycine"/>
    <property type="evidence" value="ECO:0007669"/>
    <property type="project" value="UniProtKB-UniPathway"/>
</dbReference>
<dbReference type="FunFam" id="3.40.50.720:FF:000059">
    <property type="entry name" value="L-threonine 3-dehydrogenase"/>
    <property type="match status" value="1"/>
</dbReference>
<dbReference type="Gene3D" id="3.90.180.10">
    <property type="entry name" value="Medium-chain alcohol dehydrogenases, catalytic domain"/>
    <property type="match status" value="1"/>
</dbReference>
<dbReference type="Gene3D" id="3.40.50.720">
    <property type="entry name" value="NAD(P)-binding Rossmann-like Domain"/>
    <property type="match status" value="1"/>
</dbReference>
<dbReference type="HAMAP" id="MF_00627">
    <property type="entry name" value="Thr_dehydrog"/>
    <property type="match status" value="1"/>
</dbReference>
<dbReference type="InterPro" id="IPR013149">
    <property type="entry name" value="ADH-like_C"/>
</dbReference>
<dbReference type="InterPro" id="IPR013154">
    <property type="entry name" value="ADH-like_N"/>
</dbReference>
<dbReference type="InterPro" id="IPR002328">
    <property type="entry name" value="ADH_Zn_CS"/>
</dbReference>
<dbReference type="InterPro" id="IPR011032">
    <property type="entry name" value="GroES-like_sf"/>
</dbReference>
<dbReference type="InterPro" id="IPR004627">
    <property type="entry name" value="L-Threonine_3-DHase"/>
</dbReference>
<dbReference type="InterPro" id="IPR036291">
    <property type="entry name" value="NAD(P)-bd_dom_sf"/>
</dbReference>
<dbReference type="InterPro" id="IPR020843">
    <property type="entry name" value="PKS_ER"/>
</dbReference>
<dbReference type="InterPro" id="IPR050129">
    <property type="entry name" value="Zn_alcohol_dh"/>
</dbReference>
<dbReference type="NCBIfam" id="NF003808">
    <property type="entry name" value="PRK05396.1"/>
    <property type="match status" value="1"/>
</dbReference>
<dbReference type="NCBIfam" id="TIGR00692">
    <property type="entry name" value="tdh"/>
    <property type="match status" value="1"/>
</dbReference>
<dbReference type="PANTHER" id="PTHR43401">
    <property type="entry name" value="L-THREONINE 3-DEHYDROGENASE"/>
    <property type="match status" value="1"/>
</dbReference>
<dbReference type="PANTHER" id="PTHR43401:SF2">
    <property type="entry name" value="L-THREONINE 3-DEHYDROGENASE"/>
    <property type="match status" value="1"/>
</dbReference>
<dbReference type="Pfam" id="PF08240">
    <property type="entry name" value="ADH_N"/>
    <property type="match status" value="1"/>
</dbReference>
<dbReference type="Pfam" id="PF00107">
    <property type="entry name" value="ADH_zinc_N"/>
    <property type="match status" value="1"/>
</dbReference>
<dbReference type="SMART" id="SM00829">
    <property type="entry name" value="PKS_ER"/>
    <property type="match status" value="1"/>
</dbReference>
<dbReference type="SUPFAM" id="SSF50129">
    <property type="entry name" value="GroES-like"/>
    <property type="match status" value="1"/>
</dbReference>
<dbReference type="SUPFAM" id="SSF51735">
    <property type="entry name" value="NAD(P)-binding Rossmann-fold domains"/>
    <property type="match status" value="1"/>
</dbReference>
<dbReference type="PROSITE" id="PS00059">
    <property type="entry name" value="ADH_ZINC"/>
    <property type="match status" value="1"/>
</dbReference>